<sequence length="796" mass="90157">MAPSNGPRSGKNAKSSHTLKRKRAQDDLSTLTQRVEDLDIKETYKSFSDLPLSEPTASGLASSHFKTLTDIQSRAIGHALKGRDILGAAKTGSGKTLAFLIPVLENLYRKQWSEHDGLGALILSPTRELAIQIFEVLRKIGRYHTFSAGLIIGGKSLKEEQERLGRMNILVCTPGRMLQHLDQTAMFDVFNLQMLVLDEADRILDMGFQKTVDAIVGHLPKERQTLLFSATQTKKVSDLARLSLQDPEYVAVHETASSATPSTLQQHYVVTPLSQKLDVLWSFIRSNLKAKTIVFLSSGKQVRFVYESFRHLQPGIPLMHLHGRQKQGGRLDITAKFSQAKHAVLFSTDITARGLDFPAVDWVIQMDCPEDADTYIHRVGRTARYERDGRAVLFLDPSEESGMLKRLEQKKVPIERINIKANKQQSIRDQLQNMCFKDPELKYLGQKAFISYVKSVYVQKDKEVFKLKELKLEDFASSLGLPGAPRIKFIKGDDTKERKNASRATAYLSSDDDSDEGGEKKSKKDEKQVRTKYDRMFERRNQDVLADHYSKLINDDGTLVDPSKTASAADDADEDDDFLSVKRRFDAGDEDLGGNSEEELEQKGVKVVQLDGKDTLVIDSKRREKLLKSKKKLLKFKGKGTKLIYDDEGNAHELYEMEDEEDFKARGDAKEQQARFLAEETERTRTADMEDKEVAKQKRREKKEKRKARERELLAEEEAEEAVAQLAPYKEDDEFSASDREDDAPRPSKKQKVRIAEPEESKEEPWYKKSKKPAAKAPEQIQTLEDLESLATGLLG</sequence>
<evidence type="ECO:0000250" key="1"/>
<evidence type="ECO:0000255" key="2">
    <source>
        <dbReference type="PROSITE-ProRule" id="PRU00541"/>
    </source>
</evidence>
<evidence type="ECO:0000255" key="3">
    <source>
        <dbReference type="PROSITE-ProRule" id="PRU00542"/>
    </source>
</evidence>
<evidence type="ECO:0000256" key="4">
    <source>
        <dbReference type="SAM" id="MobiDB-lite"/>
    </source>
</evidence>
<evidence type="ECO:0000305" key="5"/>
<protein>
    <recommendedName>
        <fullName>ATP-dependent RNA helicase dbp4</fullName>
        <ecNumber>3.6.4.13</ecNumber>
    </recommendedName>
</protein>
<comment type="function">
    <text evidence="1">ATP-dependent RNA helicase required for ribosome biogenesis. Involved in the release of U14 snoRNA in pre-ribosomal complexes. Required for pre-rRNA cleavage at site A2 (By similarity).</text>
</comment>
<comment type="catalytic activity">
    <reaction>
        <text>ATP + H2O = ADP + phosphate + H(+)</text>
        <dbReference type="Rhea" id="RHEA:13065"/>
        <dbReference type="ChEBI" id="CHEBI:15377"/>
        <dbReference type="ChEBI" id="CHEBI:15378"/>
        <dbReference type="ChEBI" id="CHEBI:30616"/>
        <dbReference type="ChEBI" id="CHEBI:43474"/>
        <dbReference type="ChEBI" id="CHEBI:456216"/>
        <dbReference type="EC" id="3.6.4.13"/>
    </reaction>
</comment>
<comment type="subunit">
    <text evidence="1">Interacts with the U3 and U14 snoRNAs. Associates with pre-ribosomal complexes (By similarity).</text>
</comment>
<comment type="subcellular location">
    <subcellularLocation>
        <location evidence="1">Nucleus</location>
        <location evidence="1">Nucleolus</location>
    </subcellularLocation>
</comment>
<comment type="domain">
    <text>The Q motif is unique to and characteristic of the DEAD box family of RNA helicases and controls ATP binding and hydrolysis.</text>
</comment>
<comment type="similarity">
    <text evidence="5">Belongs to the DEAD box helicase family. DDX10/DBP4 subfamily.</text>
</comment>
<dbReference type="EC" id="3.6.4.13"/>
<dbReference type="EMBL" id="BA000051">
    <property type="protein sequence ID" value="BAE59048.1"/>
    <property type="molecule type" value="Genomic_DNA"/>
</dbReference>
<dbReference type="RefSeq" id="XP_001821050.1">
    <property type="nucleotide sequence ID" value="XM_001820998.1"/>
</dbReference>
<dbReference type="SMR" id="Q2UHB7"/>
<dbReference type="STRING" id="510516.Q2UHB7"/>
<dbReference type="EnsemblFungi" id="BAE59048">
    <property type="protein sequence ID" value="BAE59048"/>
    <property type="gene ID" value="AO090023000510"/>
</dbReference>
<dbReference type="GeneID" id="5993052"/>
<dbReference type="KEGG" id="aor:AO090023000510"/>
<dbReference type="VEuPathDB" id="FungiDB:AO090023000510"/>
<dbReference type="HOGENOM" id="CLU_003041_26_1_1"/>
<dbReference type="OMA" id="YDKMFER"/>
<dbReference type="OrthoDB" id="113403at5052"/>
<dbReference type="Proteomes" id="UP000006564">
    <property type="component" value="Chromosome 3"/>
</dbReference>
<dbReference type="GO" id="GO:0005730">
    <property type="term" value="C:nucleolus"/>
    <property type="evidence" value="ECO:0007669"/>
    <property type="project" value="UniProtKB-SubCell"/>
</dbReference>
<dbReference type="GO" id="GO:0032040">
    <property type="term" value="C:small-subunit processome"/>
    <property type="evidence" value="ECO:0007669"/>
    <property type="project" value="EnsemblFungi"/>
</dbReference>
<dbReference type="GO" id="GO:0005524">
    <property type="term" value="F:ATP binding"/>
    <property type="evidence" value="ECO:0007669"/>
    <property type="project" value="UniProtKB-KW"/>
</dbReference>
<dbReference type="GO" id="GO:0016887">
    <property type="term" value="F:ATP hydrolysis activity"/>
    <property type="evidence" value="ECO:0007669"/>
    <property type="project" value="RHEA"/>
</dbReference>
<dbReference type="GO" id="GO:0042802">
    <property type="term" value="F:identical protein binding"/>
    <property type="evidence" value="ECO:0007669"/>
    <property type="project" value="EnsemblFungi"/>
</dbReference>
<dbReference type="GO" id="GO:0003723">
    <property type="term" value="F:RNA binding"/>
    <property type="evidence" value="ECO:0007669"/>
    <property type="project" value="UniProtKB-KW"/>
</dbReference>
<dbReference type="GO" id="GO:0003724">
    <property type="term" value="F:RNA helicase activity"/>
    <property type="evidence" value="ECO:0007669"/>
    <property type="project" value="UniProtKB-EC"/>
</dbReference>
<dbReference type="GO" id="GO:0006364">
    <property type="term" value="P:rRNA processing"/>
    <property type="evidence" value="ECO:0007669"/>
    <property type="project" value="UniProtKB-KW"/>
</dbReference>
<dbReference type="CDD" id="cd17941">
    <property type="entry name" value="DEADc_DDX10"/>
    <property type="match status" value="1"/>
</dbReference>
<dbReference type="CDD" id="cd18787">
    <property type="entry name" value="SF2_C_DEAD"/>
    <property type="match status" value="1"/>
</dbReference>
<dbReference type="Gene3D" id="3.40.50.300">
    <property type="entry name" value="P-loop containing nucleotide triphosphate hydrolases"/>
    <property type="match status" value="2"/>
</dbReference>
<dbReference type="InterPro" id="IPR011545">
    <property type="entry name" value="DEAD/DEAH_box_helicase_dom"/>
</dbReference>
<dbReference type="InterPro" id="IPR014001">
    <property type="entry name" value="Helicase_ATP-bd"/>
</dbReference>
<dbReference type="InterPro" id="IPR001650">
    <property type="entry name" value="Helicase_C-like"/>
</dbReference>
<dbReference type="InterPro" id="IPR027417">
    <property type="entry name" value="P-loop_NTPase"/>
</dbReference>
<dbReference type="InterPro" id="IPR000629">
    <property type="entry name" value="RNA-helicase_DEAD-box_CS"/>
</dbReference>
<dbReference type="InterPro" id="IPR014014">
    <property type="entry name" value="RNA_helicase_DEAD_Q_motif"/>
</dbReference>
<dbReference type="InterPro" id="IPR025313">
    <property type="entry name" value="SPB4-like_CTE"/>
</dbReference>
<dbReference type="PANTHER" id="PTHR24031">
    <property type="entry name" value="RNA HELICASE"/>
    <property type="match status" value="1"/>
</dbReference>
<dbReference type="Pfam" id="PF13959">
    <property type="entry name" value="CTE_SPB4"/>
    <property type="match status" value="1"/>
</dbReference>
<dbReference type="Pfam" id="PF00270">
    <property type="entry name" value="DEAD"/>
    <property type="match status" value="1"/>
</dbReference>
<dbReference type="Pfam" id="PF00271">
    <property type="entry name" value="Helicase_C"/>
    <property type="match status" value="1"/>
</dbReference>
<dbReference type="SMART" id="SM00487">
    <property type="entry name" value="DEXDc"/>
    <property type="match status" value="1"/>
</dbReference>
<dbReference type="SMART" id="SM01178">
    <property type="entry name" value="DUF4217"/>
    <property type="match status" value="1"/>
</dbReference>
<dbReference type="SMART" id="SM00490">
    <property type="entry name" value="HELICc"/>
    <property type="match status" value="1"/>
</dbReference>
<dbReference type="SUPFAM" id="SSF52540">
    <property type="entry name" value="P-loop containing nucleoside triphosphate hydrolases"/>
    <property type="match status" value="2"/>
</dbReference>
<dbReference type="PROSITE" id="PS00039">
    <property type="entry name" value="DEAD_ATP_HELICASE"/>
    <property type="match status" value="1"/>
</dbReference>
<dbReference type="PROSITE" id="PS51192">
    <property type="entry name" value="HELICASE_ATP_BIND_1"/>
    <property type="match status" value="1"/>
</dbReference>
<dbReference type="PROSITE" id="PS51194">
    <property type="entry name" value="HELICASE_CTER"/>
    <property type="match status" value="1"/>
</dbReference>
<dbReference type="PROSITE" id="PS51195">
    <property type="entry name" value="Q_MOTIF"/>
    <property type="match status" value="1"/>
</dbReference>
<organism>
    <name type="scientific">Aspergillus oryzae (strain ATCC 42149 / RIB 40)</name>
    <name type="common">Yellow koji mold</name>
    <dbReference type="NCBI Taxonomy" id="510516"/>
    <lineage>
        <taxon>Eukaryota</taxon>
        <taxon>Fungi</taxon>
        <taxon>Dikarya</taxon>
        <taxon>Ascomycota</taxon>
        <taxon>Pezizomycotina</taxon>
        <taxon>Eurotiomycetes</taxon>
        <taxon>Eurotiomycetidae</taxon>
        <taxon>Eurotiales</taxon>
        <taxon>Aspergillaceae</taxon>
        <taxon>Aspergillus</taxon>
        <taxon>Aspergillus subgen. Circumdati</taxon>
    </lineage>
</organism>
<keyword id="KW-0067">ATP-binding</keyword>
<keyword id="KW-0347">Helicase</keyword>
<keyword id="KW-0378">Hydrolase</keyword>
<keyword id="KW-0547">Nucleotide-binding</keyword>
<keyword id="KW-0539">Nucleus</keyword>
<keyword id="KW-1185">Reference proteome</keyword>
<keyword id="KW-0690">Ribosome biogenesis</keyword>
<keyword id="KW-0694">RNA-binding</keyword>
<keyword id="KW-0698">rRNA processing</keyword>
<feature type="chain" id="PRO_0000232195" description="ATP-dependent RNA helicase dbp4">
    <location>
        <begin position="1"/>
        <end position="796"/>
    </location>
</feature>
<feature type="domain" description="Helicase ATP-binding" evidence="2">
    <location>
        <begin position="76"/>
        <end position="250"/>
    </location>
</feature>
<feature type="domain" description="Helicase C-terminal" evidence="3">
    <location>
        <begin position="272"/>
        <end position="435"/>
    </location>
</feature>
<feature type="region of interest" description="Disordered" evidence="4">
    <location>
        <begin position="1"/>
        <end position="28"/>
    </location>
</feature>
<feature type="region of interest" description="Disordered" evidence="4">
    <location>
        <begin position="500"/>
        <end position="533"/>
    </location>
</feature>
<feature type="region of interest" description="Disordered" evidence="4">
    <location>
        <begin position="556"/>
        <end position="575"/>
    </location>
</feature>
<feature type="region of interest" description="Disordered" evidence="4">
    <location>
        <begin position="662"/>
        <end position="796"/>
    </location>
</feature>
<feature type="short sequence motif" description="Q motif">
    <location>
        <begin position="45"/>
        <end position="73"/>
    </location>
</feature>
<feature type="short sequence motif" description="DEAD box">
    <location>
        <begin position="198"/>
        <end position="201"/>
    </location>
</feature>
<feature type="compositionally biased region" description="Basic and acidic residues" evidence="4">
    <location>
        <begin position="517"/>
        <end position="533"/>
    </location>
</feature>
<feature type="compositionally biased region" description="Basic and acidic residues" evidence="4">
    <location>
        <begin position="663"/>
        <end position="696"/>
    </location>
</feature>
<feature type="compositionally biased region" description="Basic residues" evidence="4">
    <location>
        <begin position="697"/>
        <end position="706"/>
    </location>
</feature>
<feature type="compositionally biased region" description="Basic and acidic residues" evidence="4">
    <location>
        <begin position="737"/>
        <end position="746"/>
    </location>
</feature>
<feature type="compositionally biased region" description="Basic and acidic residues" evidence="4">
    <location>
        <begin position="754"/>
        <end position="767"/>
    </location>
</feature>
<feature type="binding site" evidence="2">
    <location>
        <begin position="89"/>
        <end position="96"/>
    </location>
    <ligand>
        <name>ATP</name>
        <dbReference type="ChEBI" id="CHEBI:30616"/>
    </ligand>
</feature>
<gene>
    <name type="primary">dbp4</name>
    <name type="ORF">AO090023000510</name>
</gene>
<proteinExistence type="inferred from homology"/>
<accession>Q2UHB7</accession>
<reference key="1">
    <citation type="journal article" date="2005" name="Nature">
        <title>Genome sequencing and analysis of Aspergillus oryzae.</title>
        <authorList>
            <person name="Machida M."/>
            <person name="Asai K."/>
            <person name="Sano M."/>
            <person name="Tanaka T."/>
            <person name="Kumagai T."/>
            <person name="Terai G."/>
            <person name="Kusumoto K."/>
            <person name="Arima T."/>
            <person name="Akita O."/>
            <person name="Kashiwagi Y."/>
            <person name="Abe K."/>
            <person name="Gomi K."/>
            <person name="Horiuchi H."/>
            <person name="Kitamoto K."/>
            <person name="Kobayashi T."/>
            <person name="Takeuchi M."/>
            <person name="Denning D.W."/>
            <person name="Galagan J.E."/>
            <person name="Nierman W.C."/>
            <person name="Yu J."/>
            <person name="Archer D.B."/>
            <person name="Bennett J.W."/>
            <person name="Bhatnagar D."/>
            <person name="Cleveland T.E."/>
            <person name="Fedorova N.D."/>
            <person name="Gotoh O."/>
            <person name="Horikawa H."/>
            <person name="Hosoyama A."/>
            <person name="Ichinomiya M."/>
            <person name="Igarashi R."/>
            <person name="Iwashita K."/>
            <person name="Juvvadi P.R."/>
            <person name="Kato M."/>
            <person name="Kato Y."/>
            <person name="Kin T."/>
            <person name="Kokubun A."/>
            <person name="Maeda H."/>
            <person name="Maeyama N."/>
            <person name="Maruyama J."/>
            <person name="Nagasaki H."/>
            <person name="Nakajima T."/>
            <person name="Oda K."/>
            <person name="Okada K."/>
            <person name="Paulsen I."/>
            <person name="Sakamoto K."/>
            <person name="Sawano T."/>
            <person name="Takahashi M."/>
            <person name="Takase K."/>
            <person name="Terabayashi Y."/>
            <person name="Wortman J.R."/>
            <person name="Yamada O."/>
            <person name="Yamagata Y."/>
            <person name="Anazawa H."/>
            <person name="Hata Y."/>
            <person name="Koide Y."/>
            <person name="Komori T."/>
            <person name="Koyama Y."/>
            <person name="Minetoki T."/>
            <person name="Suharnan S."/>
            <person name="Tanaka A."/>
            <person name="Isono K."/>
            <person name="Kuhara S."/>
            <person name="Ogasawara N."/>
            <person name="Kikuchi H."/>
        </authorList>
    </citation>
    <scope>NUCLEOTIDE SEQUENCE [LARGE SCALE GENOMIC DNA]</scope>
    <source>
        <strain>ATCC 42149 / RIB 40</strain>
    </source>
</reference>
<name>DBP4_ASPOR</name>